<keyword id="KW-0687">Ribonucleoprotein</keyword>
<keyword id="KW-0689">Ribosomal protein</keyword>
<keyword id="KW-0694">RNA-binding</keyword>
<keyword id="KW-0699">rRNA-binding</keyword>
<feature type="chain" id="PRO_1000146419" description="Small ribosomal subunit protein uS19">
    <location>
        <begin position="1"/>
        <end position="93"/>
    </location>
</feature>
<organism>
    <name type="scientific">Streptococcus pneumoniae (strain Taiwan19F-14)</name>
    <dbReference type="NCBI Taxonomy" id="487213"/>
    <lineage>
        <taxon>Bacteria</taxon>
        <taxon>Bacillati</taxon>
        <taxon>Bacillota</taxon>
        <taxon>Bacilli</taxon>
        <taxon>Lactobacillales</taxon>
        <taxon>Streptococcaceae</taxon>
        <taxon>Streptococcus</taxon>
    </lineage>
</organism>
<evidence type="ECO:0000255" key="1">
    <source>
        <dbReference type="HAMAP-Rule" id="MF_00531"/>
    </source>
</evidence>
<evidence type="ECO:0000305" key="2"/>
<accession>C1CP92</accession>
<comment type="function">
    <text evidence="1">Protein S19 forms a complex with S13 that binds strongly to the 16S ribosomal RNA.</text>
</comment>
<comment type="similarity">
    <text evidence="1">Belongs to the universal ribosomal protein uS19 family.</text>
</comment>
<gene>
    <name evidence="1" type="primary">rpsS</name>
    <name type="ordered locus">SPT_0260</name>
</gene>
<sequence>MGRSLKKGPFVDEHLMKKVEAQANDEKKKVIKTWSRRSTIFPSFIGYTIAVYDGRKHVPVYIQEDMVGHKLGEFAPTRTYKGHAADDKKTRRK</sequence>
<proteinExistence type="inferred from homology"/>
<protein>
    <recommendedName>
        <fullName evidence="1">Small ribosomal subunit protein uS19</fullName>
    </recommendedName>
    <alternativeName>
        <fullName evidence="2">30S ribosomal protein S19</fullName>
    </alternativeName>
</protein>
<dbReference type="EMBL" id="CP000921">
    <property type="protein sequence ID" value="ACO23307.1"/>
    <property type="molecule type" value="Genomic_DNA"/>
</dbReference>
<dbReference type="RefSeq" id="WP_000533766.1">
    <property type="nucleotide sequence ID" value="NC_012469.1"/>
</dbReference>
<dbReference type="SMR" id="C1CP92"/>
<dbReference type="GeneID" id="93920908"/>
<dbReference type="KEGG" id="snt:SPT_0260"/>
<dbReference type="HOGENOM" id="CLU_144911_0_1_9"/>
<dbReference type="GO" id="GO:0005737">
    <property type="term" value="C:cytoplasm"/>
    <property type="evidence" value="ECO:0007669"/>
    <property type="project" value="UniProtKB-ARBA"/>
</dbReference>
<dbReference type="GO" id="GO:0015935">
    <property type="term" value="C:small ribosomal subunit"/>
    <property type="evidence" value="ECO:0007669"/>
    <property type="project" value="InterPro"/>
</dbReference>
<dbReference type="GO" id="GO:0019843">
    <property type="term" value="F:rRNA binding"/>
    <property type="evidence" value="ECO:0007669"/>
    <property type="project" value="UniProtKB-UniRule"/>
</dbReference>
<dbReference type="GO" id="GO:0003735">
    <property type="term" value="F:structural constituent of ribosome"/>
    <property type="evidence" value="ECO:0007669"/>
    <property type="project" value="InterPro"/>
</dbReference>
<dbReference type="GO" id="GO:0000028">
    <property type="term" value="P:ribosomal small subunit assembly"/>
    <property type="evidence" value="ECO:0007669"/>
    <property type="project" value="TreeGrafter"/>
</dbReference>
<dbReference type="GO" id="GO:0006412">
    <property type="term" value="P:translation"/>
    <property type="evidence" value="ECO:0007669"/>
    <property type="project" value="UniProtKB-UniRule"/>
</dbReference>
<dbReference type="FunFam" id="3.30.860.10:FF:000001">
    <property type="entry name" value="30S ribosomal protein S19"/>
    <property type="match status" value="1"/>
</dbReference>
<dbReference type="Gene3D" id="3.30.860.10">
    <property type="entry name" value="30s Ribosomal Protein S19, Chain A"/>
    <property type="match status" value="1"/>
</dbReference>
<dbReference type="HAMAP" id="MF_00531">
    <property type="entry name" value="Ribosomal_uS19"/>
    <property type="match status" value="1"/>
</dbReference>
<dbReference type="InterPro" id="IPR002222">
    <property type="entry name" value="Ribosomal_uS19"/>
</dbReference>
<dbReference type="InterPro" id="IPR005732">
    <property type="entry name" value="Ribosomal_uS19_bac-type"/>
</dbReference>
<dbReference type="InterPro" id="IPR020934">
    <property type="entry name" value="Ribosomal_uS19_CS"/>
</dbReference>
<dbReference type="InterPro" id="IPR023575">
    <property type="entry name" value="Ribosomal_uS19_SF"/>
</dbReference>
<dbReference type="NCBIfam" id="TIGR01050">
    <property type="entry name" value="rpsS_bact"/>
    <property type="match status" value="1"/>
</dbReference>
<dbReference type="PANTHER" id="PTHR11880">
    <property type="entry name" value="RIBOSOMAL PROTEIN S19P FAMILY MEMBER"/>
    <property type="match status" value="1"/>
</dbReference>
<dbReference type="PANTHER" id="PTHR11880:SF8">
    <property type="entry name" value="SMALL RIBOSOMAL SUBUNIT PROTEIN US19M"/>
    <property type="match status" value="1"/>
</dbReference>
<dbReference type="Pfam" id="PF00203">
    <property type="entry name" value="Ribosomal_S19"/>
    <property type="match status" value="1"/>
</dbReference>
<dbReference type="PIRSF" id="PIRSF002144">
    <property type="entry name" value="Ribosomal_S19"/>
    <property type="match status" value="1"/>
</dbReference>
<dbReference type="PRINTS" id="PR00975">
    <property type="entry name" value="RIBOSOMALS19"/>
</dbReference>
<dbReference type="SUPFAM" id="SSF54570">
    <property type="entry name" value="Ribosomal protein S19"/>
    <property type="match status" value="1"/>
</dbReference>
<dbReference type="PROSITE" id="PS00323">
    <property type="entry name" value="RIBOSOMAL_S19"/>
    <property type="match status" value="1"/>
</dbReference>
<name>RS19_STRZT</name>
<reference key="1">
    <citation type="journal article" date="2010" name="Genome Biol.">
        <title>Structure and dynamics of the pan-genome of Streptococcus pneumoniae and closely related species.</title>
        <authorList>
            <person name="Donati C."/>
            <person name="Hiller N.L."/>
            <person name="Tettelin H."/>
            <person name="Muzzi A."/>
            <person name="Croucher N.J."/>
            <person name="Angiuoli S.V."/>
            <person name="Oggioni M."/>
            <person name="Dunning Hotopp J.C."/>
            <person name="Hu F.Z."/>
            <person name="Riley D.R."/>
            <person name="Covacci A."/>
            <person name="Mitchell T.J."/>
            <person name="Bentley S.D."/>
            <person name="Kilian M."/>
            <person name="Ehrlich G.D."/>
            <person name="Rappuoli R."/>
            <person name="Moxon E.R."/>
            <person name="Masignani V."/>
        </authorList>
    </citation>
    <scope>NUCLEOTIDE SEQUENCE [LARGE SCALE GENOMIC DNA]</scope>
    <source>
        <strain>Taiwan19F-14</strain>
    </source>
</reference>